<name>NU4M_AVAUN</name>
<keyword id="KW-0249">Electron transport</keyword>
<keyword id="KW-0472">Membrane</keyword>
<keyword id="KW-0496">Mitochondrion</keyword>
<keyword id="KW-0999">Mitochondrion inner membrane</keyword>
<keyword id="KW-0520">NAD</keyword>
<keyword id="KW-0679">Respiratory chain</keyword>
<keyword id="KW-1278">Translocase</keyword>
<keyword id="KW-0812">Transmembrane</keyword>
<keyword id="KW-1133">Transmembrane helix</keyword>
<keyword id="KW-0813">Transport</keyword>
<keyword id="KW-0830">Ubiquinone</keyword>
<feature type="chain" id="PRO_0000323385" description="NADH-ubiquinone oxidoreductase chain 4">
    <location>
        <begin position="1"/>
        <end position="459"/>
    </location>
</feature>
<feature type="transmembrane region" description="Helical" evidence="3">
    <location>
        <begin position="22"/>
        <end position="42"/>
    </location>
</feature>
<feature type="transmembrane region" description="Helical" evidence="3">
    <location>
        <begin position="60"/>
        <end position="80"/>
    </location>
</feature>
<feature type="transmembrane region" description="Helical" evidence="3">
    <location>
        <begin position="94"/>
        <end position="112"/>
    </location>
</feature>
<feature type="transmembrane region" description="Helical" evidence="3">
    <location>
        <begin position="113"/>
        <end position="133"/>
    </location>
</feature>
<feature type="transmembrane region" description="Helical" evidence="3">
    <location>
        <begin position="147"/>
        <end position="167"/>
    </location>
</feature>
<feature type="transmembrane region" description="Helical" evidence="3">
    <location>
        <begin position="194"/>
        <end position="214"/>
    </location>
</feature>
<feature type="transmembrane region" description="Helical" evidence="3">
    <location>
        <begin position="224"/>
        <end position="244"/>
    </location>
</feature>
<feature type="transmembrane region" description="Helical" evidence="3">
    <location>
        <begin position="257"/>
        <end position="277"/>
    </location>
</feature>
<feature type="transmembrane region" description="Helical" evidence="3">
    <location>
        <begin position="284"/>
        <end position="303"/>
    </location>
</feature>
<feature type="transmembrane region" description="Helical" evidence="3">
    <location>
        <begin position="308"/>
        <end position="330"/>
    </location>
</feature>
<feature type="transmembrane region" description="Helical" evidence="3">
    <location>
        <begin position="342"/>
        <end position="362"/>
    </location>
</feature>
<feature type="transmembrane region" description="Helical" evidence="3">
    <location>
        <begin position="391"/>
        <end position="411"/>
    </location>
</feature>
<feature type="sequence variant" description="In strain: isolate ANT5.10.">
    <original>L</original>
    <variation>I</variation>
    <location>
        <position position="54"/>
    </location>
</feature>
<feature type="sequence variant" description="In strain: isolate ANT5.10.">
    <original>L</original>
    <variation>H</variation>
    <location>
        <position position="231"/>
    </location>
</feature>
<comment type="function">
    <text evidence="1">Core subunit of the mitochondrial membrane respiratory chain NADH dehydrogenase (Complex I) which catalyzes electron transfer from NADH through the respiratory chain, using ubiquinone as an electron acceptor. Essential for the catalytic activity and assembly of complex I.</text>
</comment>
<comment type="catalytic activity">
    <reaction evidence="1">
        <text>a ubiquinone + NADH + 5 H(+)(in) = a ubiquinol + NAD(+) + 4 H(+)(out)</text>
        <dbReference type="Rhea" id="RHEA:29091"/>
        <dbReference type="Rhea" id="RHEA-COMP:9565"/>
        <dbReference type="Rhea" id="RHEA-COMP:9566"/>
        <dbReference type="ChEBI" id="CHEBI:15378"/>
        <dbReference type="ChEBI" id="CHEBI:16389"/>
        <dbReference type="ChEBI" id="CHEBI:17976"/>
        <dbReference type="ChEBI" id="CHEBI:57540"/>
        <dbReference type="ChEBI" id="CHEBI:57945"/>
        <dbReference type="EC" id="7.1.1.2"/>
    </reaction>
</comment>
<comment type="subunit">
    <text evidence="2">Core subunit of respiratory chain NADH dehydrogenase (Complex I) which is composed of 45 different subunits.</text>
</comment>
<comment type="subcellular location">
    <subcellularLocation>
        <location evidence="2">Mitochondrion inner membrane</location>
        <topology evidence="3">Multi-pass membrane protein</topology>
    </subcellularLocation>
</comment>
<comment type="similarity">
    <text evidence="4">Belongs to the complex I subunit 4 family.</text>
</comment>
<evidence type="ECO:0000250" key="1">
    <source>
        <dbReference type="UniProtKB" id="P03905"/>
    </source>
</evidence>
<evidence type="ECO:0000250" key="2">
    <source>
        <dbReference type="UniProtKB" id="P03910"/>
    </source>
</evidence>
<evidence type="ECO:0000255" key="3"/>
<evidence type="ECO:0000305" key="4"/>
<gene>
    <name type="primary">MT-ND4</name>
    <name type="synonym">MTND4</name>
    <name type="synonym">NADH4</name>
    <name type="synonym">ND4</name>
</gene>
<geneLocation type="mitochondrion"/>
<protein>
    <recommendedName>
        <fullName>NADH-ubiquinone oxidoreductase chain 4</fullName>
        <ecNumber evidence="1">7.1.1.2</ecNumber>
    </recommendedName>
    <alternativeName>
        <fullName>NADH dehydrogenase subunit 4</fullName>
    </alternativeName>
</protein>
<organism>
    <name type="scientific">Avahi unicolor</name>
    <name type="common">Sambirano woolly lemur</name>
    <dbReference type="NCBI Taxonomy" id="402239"/>
    <lineage>
        <taxon>Eukaryota</taxon>
        <taxon>Metazoa</taxon>
        <taxon>Chordata</taxon>
        <taxon>Craniata</taxon>
        <taxon>Vertebrata</taxon>
        <taxon>Euteleostomi</taxon>
        <taxon>Mammalia</taxon>
        <taxon>Eutheria</taxon>
        <taxon>Euarchontoglires</taxon>
        <taxon>Primates</taxon>
        <taxon>Strepsirrhini</taxon>
        <taxon>Lemuriformes</taxon>
        <taxon>Indriidae</taxon>
        <taxon>Avahi</taxon>
    </lineage>
</organism>
<dbReference type="EC" id="7.1.1.2" evidence="1"/>
<dbReference type="EMBL" id="DQ856109">
    <property type="protein sequence ID" value="ABI54981.1"/>
    <property type="molecule type" value="Genomic_DNA"/>
</dbReference>
<dbReference type="EMBL" id="DQ856110">
    <property type="protein sequence ID" value="ABI54985.1"/>
    <property type="molecule type" value="Genomic_DNA"/>
</dbReference>
<dbReference type="EMBL" id="DQ856111">
    <property type="protein sequence ID" value="ABI54989.1"/>
    <property type="molecule type" value="Genomic_DNA"/>
</dbReference>
<dbReference type="EMBL" id="DQ856112">
    <property type="protein sequence ID" value="ABI54993.1"/>
    <property type="molecule type" value="Genomic_DNA"/>
</dbReference>
<dbReference type="SMR" id="A8DQI9"/>
<dbReference type="GO" id="GO:0005743">
    <property type="term" value="C:mitochondrial inner membrane"/>
    <property type="evidence" value="ECO:0000250"/>
    <property type="project" value="UniProtKB"/>
</dbReference>
<dbReference type="GO" id="GO:0008137">
    <property type="term" value="F:NADH dehydrogenase (ubiquinone) activity"/>
    <property type="evidence" value="ECO:0000250"/>
    <property type="project" value="UniProtKB"/>
</dbReference>
<dbReference type="GO" id="GO:0048039">
    <property type="term" value="F:ubiquinone binding"/>
    <property type="evidence" value="ECO:0007669"/>
    <property type="project" value="TreeGrafter"/>
</dbReference>
<dbReference type="GO" id="GO:0015990">
    <property type="term" value="P:electron transport coupled proton transport"/>
    <property type="evidence" value="ECO:0007669"/>
    <property type="project" value="TreeGrafter"/>
</dbReference>
<dbReference type="GO" id="GO:0006120">
    <property type="term" value="P:mitochondrial electron transport, NADH to ubiquinone"/>
    <property type="evidence" value="ECO:0000250"/>
    <property type="project" value="UniProtKB"/>
</dbReference>
<dbReference type="GO" id="GO:0032981">
    <property type="term" value="P:mitochondrial respiratory chain complex I assembly"/>
    <property type="evidence" value="ECO:0000250"/>
    <property type="project" value="UniProtKB"/>
</dbReference>
<dbReference type="InterPro" id="IPR000260">
    <property type="entry name" value="NADH4_N"/>
</dbReference>
<dbReference type="InterPro" id="IPR010227">
    <property type="entry name" value="NADH_Q_OxRdtase_chainM/4"/>
</dbReference>
<dbReference type="InterPro" id="IPR003918">
    <property type="entry name" value="NADH_UbQ_OxRdtase"/>
</dbReference>
<dbReference type="InterPro" id="IPR001750">
    <property type="entry name" value="ND/Mrp_TM"/>
</dbReference>
<dbReference type="NCBIfam" id="TIGR01972">
    <property type="entry name" value="NDH_I_M"/>
    <property type="match status" value="1"/>
</dbReference>
<dbReference type="PANTHER" id="PTHR43507">
    <property type="entry name" value="NADH-UBIQUINONE OXIDOREDUCTASE CHAIN 4"/>
    <property type="match status" value="1"/>
</dbReference>
<dbReference type="PANTHER" id="PTHR43507:SF20">
    <property type="entry name" value="NADH-UBIQUINONE OXIDOREDUCTASE CHAIN 4"/>
    <property type="match status" value="1"/>
</dbReference>
<dbReference type="Pfam" id="PF01059">
    <property type="entry name" value="Oxidored_q5_N"/>
    <property type="match status" value="1"/>
</dbReference>
<dbReference type="Pfam" id="PF00361">
    <property type="entry name" value="Proton_antipo_M"/>
    <property type="match status" value="1"/>
</dbReference>
<dbReference type="PRINTS" id="PR01437">
    <property type="entry name" value="NUOXDRDTASE4"/>
</dbReference>
<proteinExistence type="inferred from homology"/>
<sequence>MLKIIIPTIMLFPVTWYSNNSMIWINTTSHSLMISLMGLFLLNHPSNNSNNFSLNFFSDPLSSPLLMLTMWLLPLMIMASQYHLAKEPWFRKKSYLSMLITLQTFLIMTFMATELILFYILFEATLIPTLIIITRWGNQTERLNAGMYFLFYTLTGSLPLLVALIYLQNSMGSLNLLTINLWLKELPNSWSTNLLWMACIMAFMVKMPLYGLHLWLPKAHVEAPIAGSMVLAAVLLKLGGYGMMRITMILDPTTKSMAYPFLMLCLWGMIMTSSICLRQTDLKSLIAYSSVSHMALVIVAILVQTPLGFMGATALMIAHGLTSSMLFCLANSNYERIHSRTMLMARGLQTLLPLTATWWLLASLNNLALPPSINLIGELLVTITSFSWSNITVILIGLNMLITALYSLYMLITTQRGKLTYYLHNLNPSLTRENTLMSMHILPLLFLTLNPKIILGPTF</sequence>
<reference key="1">
    <citation type="journal article" date="2007" name="Spec. Publ. Mus. Tex. Tech. Univ.">
        <title>Molecular phylogeny and taxonomic revision of the woolly lemurs, genus Avahi (primates: lemuriformes).</title>
        <authorList>
            <person name="Andriantompohavana R."/>
            <person name="Lei R."/>
            <person name="Zaonarivelo J.R."/>
            <person name="Engberg S.E."/>
            <person name="Nalanirina G."/>
            <person name="McGuire S.M."/>
            <person name="Shore G.D."/>
            <person name="Andrianasolo J."/>
            <person name="Herrington K."/>
            <person name="Brenneman R.A."/>
            <person name="Louis E.E. Jr."/>
        </authorList>
    </citation>
    <scope>NUCLEOTIDE SEQUENCE [GENOMIC DNA]</scope>
    <source>
        <strain>Isolate ANT5.10</strain>
        <strain>Isolate ANT5.12</strain>
        <strain>Isolate ANT5.8</strain>
        <strain>Isolate ANT5.9</strain>
    </source>
</reference>
<accession>A8DQI9</accession>
<accession>A8DQJ7</accession>